<protein>
    <recommendedName>
        <fullName evidence="1">Cytochrome b6</fullName>
    </recommendedName>
</protein>
<sequence>MSKVYDWFEERLEIQAIADDVTTKYVPPHVNIFYCLGGVTLVCFIIQFATGFAMTFYYRPTVTEAFNSIQYIMTEVNFGWLIRSIHRWSASMMVLMMILHVFRVYLTGGFKKPRELTWITGVVLAVITVTFGVTGYSLPWDQVGYWAVKIVSGVPEAIPVVGSSIVELLRGGTSVGQSTLTRFYSLHTFVLPWLIAVFMLLHFLMIRKQGISGPL</sequence>
<gene>
    <name evidence="1" type="primary">petB</name>
    <name type="ordered locus">AM1_4666</name>
</gene>
<organism>
    <name type="scientific">Acaryochloris marina (strain MBIC 11017)</name>
    <dbReference type="NCBI Taxonomy" id="329726"/>
    <lineage>
        <taxon>Bacteria</taxon>
        <taxon>Bacillati</taxon>
        <taxon>Cyanobacteriota</taxon>
        <taxon>Cyanophyceae</taxon>
        <taxon>Acaryochloridales</taxon>
        <taxon>Acaryochloridaceae</taxon>
        <taxon>Acaryochloris</taxon>
    </lineage>
</organism>
<keyword id="KW-0249">Electron transport</keyword>
<keyword id="KW-0349">Heme</keyword>
<keyword id="KW-0408">Iron</keyword>
<keyword id="KW-0472">Membrane</keyword>
<keyword id="KW-0479">Metal-binding</keyword>
<keyword id="KW-0602">Photosynthesis</keyword>
<keyword id="KW-1185">Reference proteome</keyword>
<keyword id="KW-0793">Thylakoid</keyword>
<keyword id="KW-0812">Transmembrane</keyword>
<keyword id="KW-1133">Transmembrane helix</keyword>
<keyword id="KW-0813">Transport</keyword>
<evidence type="ECO:0000255" key="1">
    <source>
        <dbReference type="HAMAP-Rule" id="MF_00633"/>
    </source>
</evidence>
<name>CYB6_ACAM1</name>
<comment type="function">
    <text evidence="1">Component of the cytochrome b6-f complex, which mediates electron transfer between photosystem II (PSII) and photosystem I (PSI), cyclic electron flow around PSI, and state transitions.</text>
</comment>
<comment type="cofactor">
    <cofactor evidence="1">
        <name>heme b</name>
        <dbReference type="ChEBI" id="CHEBI:60344"/>
    </cofactor>
    <text evidence="1">Binds 2 heme b groups non-covalently with two histidine residues as axial ligands.</text>
</comment>
<comment type="cofactor">
    <cofactor evidence="1">
        <name>heme c</name>
        <dbReference type="ChEBI" id="CHEBI:61717"/>
    </cofactor>
    <text evidence="1">Binds one heme group covalently by a single cysteine link with no axial amino acid ligand. This heme was named heme ci.</text>
</comment>
<comment type="subunit">
    <text evidence="1">The 4 large subunits of the cytochrome b6-f complex are cytochrome b6, subunit IV (17 kDa polypeptide, PetD), cytochrome f and the Rieske protein, while the 4 small subunits are PetG, PetL, PetM and PetN. The complex functions as a dimer.</text>
</comment>
<comment type="subcellular location">
    <subcellularLocation>
        <location evidence="1">Cellular thylakoid membrane</location>
        <topology evidence="1">Multi-pass membrane protein</topology>
    </subcellularLocation>
</comment>
<comment type="miscellaneous">
    <text evidence="1">Heme 1 (or BH or b566) is high-potential and absorbs at about 566 nm, and heme 2 (or BL or b562) is low-potential and absorbs at about 562 nm.</text>
</comment>
<comment type="similarity">
    <text evidence="1">Belongs to the cytochrome b family. PetB subfamily.</text>
</comment>
<dbReference type="EMBL" id="CP000828">
    <property type="protein sequence ID" value="ABW29640.1"/>
    <property type="molecule type" value="Genomic_DNA"/>
</dbReference>
<dbReference type="RefSeq" id="WP_010471635.1">
    <property type="nucleotide sequence ID" value="NC_009925.1"/>
</dbReference>
<dbReference type="SMR" id="B0C0E8"/>
<dbReference type="STRING" id="329726.AM1_4666"/>
<dbReference type="KEGG" id="amr:AM1_4666"/>
<dbReference type="eggNOG" id="COG1290">
    <property type="taxonomic scope" value="Bacteria"/>
</dbReference>
<dbReference type="HOGENOM" id="CLU_031114_0_2_3"/>
<dbReference type="OrthoDB" id="9804503at2"/>
<dbReference type="Proteomes" id="UP000000268">
    <property type="component" value="Chromosome"/>
</dbReference>
<dbReference type="GO" id="GO:0031676">
    <property type="term" value="C:plasma membrane-derived thylakoid membrane"/>
    <property type="evidence" value="ECO:0007669"/>
    <property type="project" value="UniProtKB-SubCell"/>
</dbReference>
<dbReference type="GO" id="GO:0045158">
    <property type="term" value="F:electron transporter, transferring electrons within cytochrome b6/f complex of photosystem II activity"/>
    <property type="evidence" value="ECO:0007669"/>
    <property type="project" value="UniProtKB-UniRule"/>
</dbReference>
<dbReference type="GO" id="GO:0046872">
    <property type="term" value="F:metal ion binding"/>
    <property type="evidence" value="ECO:0007669"/>
    <property type="project" value="UniProtKB-KW"/>
</dbReference>
<dbReference type="GO" id="GO:0016491">
    <property type="term" value="F:oxidoreductase activity"/>
    <property type="evidence" value="ECO:0007669"/>
    <property type="project" value="InterPro"/>
</dbReference>
<dbReference type="GO" id="GO:0015979">
    <property type="term" value="P:photosynthesis"/>
    <property type="evidence" value="ECO:0007669"/>
    <property type="project" value="UniProtKB-UniRule"/>
</dbReference>
<dbReference type="GO" id="GO:0022904">
    <property type="term" value="P:respiratory electron transport chain"/>
    <property type="evidence" value="ECO:0007669"/>
    <property type="project" value="InterPro"/>
</dbReference>
<dbReference type="CDD" id="cd00284">
    <property type="entry name" value="Cytochrome_b_N"/>
    <property type="match status" value="1"/>
</dbReference>
<dbReference type="FunFam" id="1.20.810.10:FF:000001">
    <property type="entry name" value="Cytochrome b6"/>
    <property type="match status" value="1"/>
</dbReference>
<dbReference type="Gene3D" id="1.20.810.10">
    <property type="entry name" value="Cytochrome Bc1 Complex, Chain C"/>
    <property type="match status" value="1"/>
</dbReference>
<dbReference type="HAMAP" id="MF_00633">
    <property type="entry name" value="Cytb6_f_cytb6"/>
    <property type="match status" value="1"/>
</dbReference>
<dbReference type="InterPro" id="IPR005797">
    <property type="entry name" value="Cyt_b/b6_N"/>
</dbReference>
<dbReference type="InterPro" id="IPR023530">
    <property type="entry name" value="Cyt_B6_PetB"/>
</dbReference>
<dbReference type="InterPro" id="IPR027387">
    <property type="entry name" value="Cytb/b6-like_sf"/>
</dbReference>
<dbReference type="InterPro" id="IPR048259">
    <property type="entry name" value="Cytochrome_b_N_euk/bac"/>
</dbReference>
<dbReference type="InterPro" id="IPR016174">
    <property type="entry name" value="Di-haem_cyt_TM"/>
</dbReference>
<dbReference type="NCBIfam" id="NF002990">
    <property type="entry name" value="PRK03735.1"/>
    <property type="match status" value="1"/>
</dbReference>
<dbReference type="PANTHER" id="PTHR19271">
    <property type="entry name" value="CYTOCHROME B"/>
    <property type="match status" value="1"/>
</dbReference>
<dbReference type="PANTHER" id="PTHR19271:SF16">
    <property type="entry name" value="CYTOCHROME B"/>
    <property type="match status" value="1"/>
</dbReference>
<dbReference type="Pfam" id="PF00033">
    <property type="entry name" value="Cytochrome_B"/>
    <property type="match status" value="1"/>
</dbReference>
<dbReference type="PIRSF" id="PIRSF000032">
    <property type="entry name" value="Cytochrome_b6"/>
    <property type="match status" value="1"/>
</dbReference>
<dbReference type="SUPFAM" id="SSF81342">
    <property type="entry name" value="Transmembrane di-heme cytochromes"/>
    <property type="match status" value="1"/>
</dbReference>
<dbReference type="PROSITE" id="PS51002">
    <property type="entry name" value="CYTB_NTER"/>
    <property type="match status" value="1"/>
</dbReference>
<reference key="1">
    <citation type="journal article" date="2008" name="Proc. Natl. Acad. Sci. U.S.A.">
        <title>Niche adaptation and genome expansion in the chlorophyll d-producing cyanobacterium Acaryochloris marina.</title>
        <authorList>
            <person name="Swingley W.D."/>
            <person name="Chen M."/>
            <person name="Cheung P.C."/>
            <person name="Conrad A.L."/>
            <person name="Dejesa L.C."/>
            <person name="Hao J."/>
            <person name="Honchak B.M."/>
            <person name="Karbach L.E."/>
            <person name="Kurdoglu A."/>
            <person name="Lahiri S."/>
            <person name="Mastrian S.D."/>
            <person name="Miyashita H."/>
            <person name="Page L."/>
            <person name="Ramakrishna P."/>
            <person name="Satoh S."/>
            <person name="Sattley W.M."/>
            <person name="Shimada Y."/>
            <person name="Taylor H.L."/>
            <person name="Tomo T."/>
            <person name="Tsuchiya T."/>
            <person name="Wang Z.T."/>
            <person name="Raymond J."/>
            <person name="Mimuro M."/>
            <person name="Blankenship R.E."/>
            <person name="Touchman J.W."/>
        </authorList>
    </citation>
    <scope>NUCLEOTIDE SEQUENCE [LARGE SCALE GENOMIC DNA]</scope>
    <source>
        <strain>MBIC 11017</strain>
    </source>
</reference>
<proteinExistence type="inferred from homology"/>
<feature type="chain" id="PRO_1000082637" description="Cytochrome b6">
    <location>
        <begin position="1"/>
        <end position="215"/>
    </location>
</feature>
<feature type="transmembrane region" description="Helical" evidence="1">
    <location>
        <begin position="32"/>
        <end position="52"/>
    </location>
</feature>
<feature type="transmembrane region" description="Helical" evidence="1">
    <location>
        <begin position="90"/>
        <end position="110"/>
    </location>
</feature>
<feature type="transmembrane region" description="Helical" evidence="1">
    <location>
        <begin position="116"/>
        <end position="136"/>
    </location>
</feature>
<feature type="transmembrane region" description="Helical" evidence="1">
    <location>
        <begin position="186"/>
        <end position="206"/>
    </location>
</feature>
<feature type="binding site" description="covalent" evidence="1">
    <location>
        <position position="35"/>
    </location>
    <ligand>
        <name>heme c</name>
        <dbReference type="ChEBI" id="CHEBI:61717"/>
    </ligand>
</feature>
<feature type="binding site" description="axial binding residue" evidence="1">
    <location>
        <position position="86"/>
    </location>
    <ligand>
        <name>heme b</name>
        <dbReference type="ChEBI" id="CHEBI:60344"/>
        <label>2</label>
    </ligand>
    <ligandPart>
        <name>Fe</name>
        <dbReference type="ChEBI" id="CHEBI:18248"/>
    </ligandPart>
</feature>
<feature type="binding site" description="axial binding residue" evidence="1">
    <location>
        <position position="100"/>
    </location>
    <ligand>
        <name>heme b</name>
        <dbReference type="ChEBI" id="CHEBI:60344"/>
        <label>1</label>
    </ligand>
    <ligandPart>
        <name>Fe</name>
        <dbReference type="ChEBI" id="CHEBI:18248"/>
    </ligandPart>
</feature>
<feature type="binding site" description="axial binding residue" evidence="1">
    <location>
        <position position="187"/>
    </location>
    <ligand>
        <name>heme b</name>
        <dbReference type="ChEBI" id="CHEBI:60344"/>
        <label>2</label>
    </ligand>
    <ligandPart>
        <name>Fe</name>
        <dbReference type="ChEBI" id="CHEBI:18248"/>
    </ligandPart>
</feature>
<feature type="binding site" description="axial binding residue" evidence="1">
    <location>
        <position position="202"/>
    </location>
    <ligand>
        <name>heme b</name>
        <dbReference type="ChEBI" id="CHEBI:60344"/>
        <label>1</label>
    </ligand>
    <ligandPart>
        <name>Fe</name>
        <dbReference type="ChEBI" id="CHEBI:18248"/>
    </ligandPart>
</feature>
<accession>B0C0E8</accession>